<organism>
    <name type="scientific">Kineococcus radiotolerans (strain ATCC BAA-149 / DSM 14245 / SRS30216)</name>
    <dbReference type="NCBI Taxonomy" id="266940"/>
    <lineage>
        <taxon>Bacteria</taxon>
        <taxon>Bacillati</taxon>
        <taxon>Actinomycetota</taxon>
        <taxon>Actinomycetes</taxon>
        <taxon>Kineosporiales</taxon>
        <taxon>Kineosporiaceae</taxon>
        <taxon>Kineococcus</taxon>
    </lineage>
</organism>
<name>RIMP_KINRD</name>
<feature type="chain" id="PRO_1000084527" description="Ribosome maturation factor RimP">
    <location>
        <begin position="1"/>
        <end position="208"/>
    </location>
</feature>
<feature type="region of interest" description="Disordered" evidence="2">
    <location>
        <begin position="175"/>
        <end position="208"/>
    </location>
</feature>
<feature type="compositionally biased region" description="Acidic residues" evidence="2">
    <location>
        <begin position="177"/>
        <end position="208"/>
    </location>
</feature>
<comment type="function">
    <text evidence="1">Required for maturation of 30S ribosomal subunits.</text>
</comment>
<comment type="subcellular location">
    <subcellularLocation>
        <location evidence="1">Cytoplasm</location>
    </subcellularLocation>
</comment>
<comment type="similarity">
    <text evidence="1">Belongs to the RimP family.</text>
</comment>
<keyword id="KW-0963">Cytoplasm</keyword>
<keyword id="KW-1185">Reference proteome</keyword>
<keyword id="KW-0690">Ribosome biogenesis</keyword>
<reference key="1">
    <citation type="journal article" date="2008" name="PLoS ONE">
        <title>Survival in nuclear waste, extreme resistance, and potential applications gleaned from the genome sequence of Kineococcus radiotolerans SRS30216.</title>
        <authorList>
            <person name="Bagwell C.E."/>
            <person name="Bhat S."/>
            <person name="Hawkins G.M."/>
            <person name="Smith B.W."/>
            <person name="Biswas T."/>
            <person name="Hoover T.R."/>
            <person name="Saunders E."/>
            <person name="Han C.S."/>
            <person name="Tsodikov O.V."/>
            <person name="Shimkets L.J."/>
        </authorList>
    </citation>
    <scope>NUCLEOTIDE SEQUENCE [LARGE SCALE GENOMIC DNA]</scope>
    <source>
        <strain>ATCC BAA-149 / DSM 14245 / SRS30216</strain>
    </source>
</reference>
<proteinExistence type="inferred from homology"/>
<sequence>MPTLDEAVTTVLTPVFAAGSEIGADLALEEVSVTTAGRRQVVRVVVDRAGDEPGDLDLDAVAAASTAVSEALDESGVLGEAPYTLEVSSPGVDRPLTTPRHWSRARGRLVRAVLTDGTALLVRVVSVDEAGVHGTLEPQMVKGKPPRAKDVGAPRDLAWADLVRGEVQVEFRRPGEDVEDLVADPGADDELDELDELDELDDGDEDEQ</sequence>
<dbReference type="EMBL" id="CP000750">
    <property type="protein sequence ID" value="ABS02928.1"/>
    <property type="molecule type" value="Genomic_DNA"/>
</dbReference>
<dbReference type="RefSeq" id="WP_011981933.1">
    <property type="nucleotide sequence ID" value="NC_009664.2"/>
</dbReference>
<dbReference type="SMR" id="A6W7Y9"/>
<dbReference type="STRING" id="266940.Krad_1440"/>
<dbReference type="KEGG" id="kra:Krad_1440"/>
<dbReference type="eggNOG" id="COG0779">
    <property type="taxonomic scope" value="Bacteria"/>
</dbReference>
<dbReference type="HOGENOM" id="CLU_070525_3_0_11"/>
<dbReference type="Proteomes" id="UP000001116">
    <property type="component" value="Chromosome"/>
</dbReference>
<dbReference type="GO" id="GO:0005829">
    <property type="term" value="C:cytosol"/>
    <property type="evidence" value="ECO:0007669"/>
    <property type="project" value="TreeGrafter"/>
</dbReference>
<dbReference type="GO" id="GO:0000028">
    <property type="term" value="P:ribosomal small subunit assembly"/>
    <property type="evidence" value="ECO:0007669"/>
    <property type="project" value="TreeGrafter"/>
</dbReference>
<dbReference type="GO" id="GO:0006412">
    <property type="term" value="P:translation"/>
    <property type="evidence" value="ECO:0007669"/>
    <property type="project" value="TreeGrafter"/>
</dbReference>
<dbReference type="Gene3D" id="3.30.300.70">
    <property type="entry name" value="RimP-like superfamily, N-terminal"/>
    <property type="match status" value="1"/>
</dbReference>
<dbReference type="HAMAP" id="MF_01077">
    <property type="entry name" value="RimP"/>
    <property type="match status" value="1"/>
</dbReference>
<dbReference type="InterPro" id="IPR003728">
    <property type="entry name" value="Ribosome_maturation_RimP"/>
</dbReference>
<dbReference type="InterPro" id="IPR028989">
    <property type="entry name" value="RimP_N"/>
</dbReference>
<dbReference type="InterPro" id="IPR035956">
    <property type="entry name" value="RimP_N_sf"/>
</dbReference>
<dbReference type="NCBIfam" id="NF000930">
    <property type="entry name" value="PRK00092.2-2"/>
    <property type="match status" value="1"/>
</dbReference>
<dbReference type="PANTHER" id="PTHR33867">
    <property type="entry name" value="RIBOSOME MATURATION FACTOR RIMP"/>
    <property type="match status" value="1"/>
</dbReference>
<dbReference type="PANTHER" id="PTHR33867:SF1">
    <property type="entry name" value="RIBOSOME MATURATION FACTOR RIMP"/>
    <property type="match status" value="1"/>
</dbReference>
<dbReference type="Pfam" id="PF02576">
    <property type="entry name" value="RimP_N"/>
    <property type="match status" value="1"/>
</dbReference>
<dbReference type="SUPFAM" id="SSF75420">
    <property type="entry name" value="YhbC-like, N-terminal domain"/>
    <property type="match status" value="1"/>
</dbReference>
<evidence type="ECO:0000255" key="1">
    <source>
        <dbReference type="HAMAP-Rule" id="MF_01077"/>
    </source>
</evidence>
<evidence type="ECO:0000256" key="2">
    <source>
        <dbReference type="SAM" id="MobiDB-lite"/>
    </source>
</evidence>
<gene>
    <name evidence="1" type="primary">rimP</name>
    <name type="ordered locus">Krad_1440</name>
</gene>
<accession>A6W7Y9</accession>
<protein>
    <recommendedName>
        <fullName evidence="1">Ribosome maturation factor RimP</fullName>
    </recommendedName>
</protein>